<accession>Q8X6C7</accession>
<comment type="function">
    <text evidence="1">Presumed to be a dehydrogenase, but possibly an oxidase. Participates in limited purine salvage (requires aspartate) but does not support aerobic growth on purines as the sole carbon source (purine catabolism) (By similarity).</text>
</comment>
<comment type="catalytic activity">
    <reaction>
        <text>xanthine + NAD(+) + H2O = urate + NADH + H(+)</text>
        <dbReference type="Rhea" id="RHEA:16669"/>
        <dbReference type="ChEBI" id="CHEBI:15377"/>
        <dbReference type="ChEBI" id="CHEBI:15378"/>
        <dbReference type="ChEBI" id="CHEBI:17712"/>
        <dbReference type="ChEBI" id="CHEBI:17775"/>
        <dbReference type="ChEBI" id="CHEBI:57540"/>
        <dbReference type="ChEBI" id="CHEBI:57945"/>
        <dbReference type="EC" id="1.17.1.4"/>
    </reaction>
</comment>
<comment type="catalytic activity">
    <reaction>
        <text>hypoxanthine + NAD(+) + H2O = xanthine + NADH + H(+)</text>
        <dbReference type="Rhea" id="RHEA:24670"/>
        <dbReference type="ChEBI" id="CHEBI:15377"/>
        <dbReference type="ChEBI" id="CHEBI:15378"/>
        <dbReference type="ChEBI" id="CHEBI:17368"/>
        <dbReference type="ChEBI" id="CHEBI:17712"/>
        <dbReference type="ChEBI" id="CHEBI:57540"/>
        <dbReference type="ChEBI" id="CHEBI:57945"/>
        <dbReference type="EC" id="1.17.1.4"/>
    </reaction>
</comment>
<comment type="cofactor">
    <cofactor evidence="1">
        <name>Mo-molybdopterin</name>
        <dbReference type="ChEBI" id="CHEBI:71302"/>
    </cofactor>
    <text evidence="1">Binds 1 Mo-molybdopterin (Mo-MPT) cofactor per subunit.</text>
</comment>
<comment type="pathway">
    <text>Purine metabolism; hypoxanthine degradation; urate from hypoxanthine: step 1/2.</text>
</comment>
<comment type="pathway">
    <text>Purine metabolism; hypoxanthine degradation; urate from hypoxanthine: step 2/2.</text>
</comment>
<comment type="subunit">
    <text evidence="2">Heterotrimer of XdhA, XdhB and XdhC.</text>
</comment>
<comment type="similarity">
    <text evidence="2">Belongs to the xanthine dehydrogenase family.</text>
</comment>
<comment type="sequence caution" evidence="2">
    <conflict type="erroneous initiation">
        <sequence resource="EMBL-CDS" id="BAB37162"/>
    </conflict>
    <text>Extended N-terminus.</text>
</comment>
<sequence>MRVDAIAKVTGRARYTDDYVMAGMCYAKYVRSPIAHGYAVSINDEQARSLPGVLAIFTWEDVPDIPFATAGHAWTLDENKRDTADRALLTRHVRHHGDAVAIVVARDELTAEKAAQLVSIEWEELPVITTPEAALAEDAAPIHNGGNLLKQSTMSTGNVQQTIDAADYQVQGHYQTPVIQHCHMESVTSLAWMEDDSRITIVSSTQIPHIVRRVVGQALDIPWSCVRVIKTFVGGGFGNKQDVLEEPMAAFLTSKLGGIPVKVSLSREECFLATRTRHAFTIDGQMGVNRDGTLKGYSLDVLSNTGAYVSHGHSIASAGGNKVAYLYPRCAYAYSSKTCYTNLPSAGAMRGYGAPQVVFAVESMLDDAATALGIDPVEIRLRNASREGDANPLTGKRIYSAGLPECLEKGRKIFEWEKRRAECQNQQGNLRRGVGVACFSYTSNTWPVGVEIAGARLLMNQDGTINVQSGATEIGQGADTVFSQMVAETVGVPVSDVRVISTQDTDVTPFDPGAFASRQSYVAAPALRSAALLLKEKIIAHAAVMLHQSAMNLTLIKGHIVLVERPEEPLMSLKDLAMDAFYHPERGGQLSAESSIKTTTNPPAFGCTFVDLTVDIALCKVTINRILNVHDSGHILNPLLAEGQVHGGMGMGIGWALFEEMIIDAKSGVVRNPNLLDYKMPTMPDLPQLESAFVEINEPQSAYGHKSLGEPPIIPVAAAIRNAVKMATGVAINTLPLTPKRLYEEFHLAGLI</sequence>
<feature type="chain" id="PRO_0000166089" description="Xanthine dehydrogenase molybdenum-binding subunit">
    <location>
        <begin position="1"/>
        <end position="752"/>
    </location>
</feature>
<feature type="binding site" evidence="1">
    <location>
        <position position="206"/>
    </location>
    <ligand>
        <name>Mo-molybdopterin</name>
        <dbReference type="ChEBI" id="CHEBI:71302"/>
    </ligand>
    <ligandPart>
        <name>Mo</name>
        <dbReference type="ChEBI" id="CHEBI:28685"/>
    </ligandPart>
</feature>
<feature type="binding site" evidence="1">
    <location>
        <position position="237"/>
    </location>
    <ligand>
        <name>Mo-molybdopterin</name>
        <dbReference type="ChEBI" id="CHEBI:71302"/>
    </ligand>
    <ligandPart>
        <name>Mo</name>
        <dbReference type="ChEBI" id="CHEBI:28685"/>
    </ligandPart>
</feature>
<feature type="binding site" evidence="1">
    <location>
        <position position="350"/>
    </location>
    <ligand>
        <name>Mo-molybdopterin</name>
        <dbReference type="ChEBI" id="CHEBI:71302"/>
    </ligand>
    <ligandPart>
        <name>Mo</name>
        <dbReference type="ChEBI" id="CHEBI:28685"/>
    </ligandPart>
</feature>
<feature type="binding site" evidence="1">
    <location>
        <position position="516"/>
    </location>
    <ligand>
        <name>Mo-molybdopterin</name>
        <dbReference type="ChEBI" id="CHEBI:71302"/>
    </ligand>
    <ligandPart>
        <name>Mo</name>
        <dbReference type="ChEBI" id="CHEBI:28685"/>
    </ligandPart>
</feature>
<evidence type="ECO:0000250" key="1"/>
<evidence type="ECO:0000305" key="2"/>
<organism>
    <name type="scientific">Escherichia coli O157:H7</name>
    <dbReference type="NCBI Taxonomy" id="83334"/>
    <lineage>
        <taxon>Bacteria</taxon>
        <taxon>Pseudomonadati</taxon>
        <taxon>Pseudomonadota</taxon>
        <taxon>Gammaproteobacteria</taxon>
        <taxon>Enterobacterales</taxon>
        <taxon>Enterobacteriaceae</taxon>
        <taxon>Escherichia</taxon>
    </lineage>
</organism>
<reference key="1">
    <citation type="journal article" date="2001" name="Nature">
        <title>Genome sequence of enterohaemorrhagic Escherichia coli O157:H7.</title>
        <authorList>
            <person name="Perna N.T."/>
            <person name="Plunkett G. III"/>
            <person name="Burland V."/>
            <person name="Mau B."/>
            <person name="Glasner J.D."/>
            <person name="Rose D.J."/>
            <person name="Mayhew G.F."/>
            <person name="Evans P.S."/>
            <person name="Gregor J."/>
            <person name="Kirkpatrick H.A."/>
            <person name="Posfai G."/>
            <person name="Hackett J."/>
            <person name="Klink S."/>
            <person name="Boutin A."/>
            <person name="Shao Y."/>
            <person name="Miller L."/>
            <person name="Grotbeck E.J."/>
            <person name="Davis N.W."/>
            <person name="Lim A."/>
            <person name="Dimalanta E.T."/>
            <person name="Potamousis K."/>
            <person name="Apodaca J."/>
            <person name="Anantharaman T.S."/>
            <person name="Lin J."/>
            <person name="Yen G."/>
            <person name="Schwartz D.C."/>
            <person name="Welch R.A."/>
            <person name="Blattner F.R."/>
        </authorList>
    </citation>
    <scope>NUCLEOTIDE SEQUENCE [LARGE SCALE GENOMIC DNA]</scope>
    <source>
        <strain>O157:H7 / EDL933 / ATCC 700927 / EHEC</strain>
    </source>
</reference>
<reference key="2">
    <citation type="journal article" date="2001" name="DNA Res.">
        <title>Complete genome sequence of enterohemorrhagic Escherichia coli O157:H7 and genomic comparison with a laboratory strain K-12.</title>
        <authorList>
            <person name="Hayashi T."/>
            <person name="Makino K."/>
            <person name="Ohnishi M."/>
            <person name="Kurokawa K."/>
            <person name="Ishii K."/>
            <person name="Yokoyama K."/>
            <person name="Han C.-G."/>
            <person name="Ohtsubo E."/>
            <person name="Nakayama K."/>
            <person name="Murata T."/>
            <person name="Tanaka M."/>
            <person name="Tobe T."/>
            <person name="Iida T."/>
            <person name="Takami H."/>
            <person name="Honda T."/>
            <person name="Sasakawa C."/>
            <person name="Ogasawara N."/>
            <person name="Yasunaga T."/>
            <person name="Kuhara S."/>
            <person name="Shiba T."/>
            <person name="Hattori M."/>
            <person name="Shinagawa H."/>
        </authorList>
    </citation>
    <scope>NUCLEOTIDE SEQUENCE [LARGE SCALE GENOMIC DNA]</scope>
    <source>
        <strain>O157:H7 / Sakai / RIMD 0509952 / EHEC</strain>
    </source>
</reference>
<name>XDHA_ECO57</name>
<proteinExistence type="inferred from homology"/>
<protein>
    <recommendedName>
        <fullName>Xanthine dehydrogenase molybdenum-binding subunit</fullName>
        <ecNumber>1.17.1.4</ecNumber>
    </recommendedName>
</protein>
<keyword id="KW-0479">Metal-binding</keyword>
<keyword id="KW-0500">Molybdenum</keyword>
<keyword id="KW-0520">NAD</keyword>
<keyword id="KW-0560">Oxidoreductase</keyword>
<keyword id="KW-0659">Purine metabolism</keyword>
<keyword id="KW-0660">Purine salvage</keyword>
<keyword id="KW-1185">Reference proteome</keyword>
<gene>
    <name type="primary">xdhA</name>
    <name type="ordered locus">Z4205</name>
    <name type="ordered locus">ECs3739</name>
</gene>
<dbReference type="EC" id="1.17.1.4"/>
<dbReference type="EMBL" id="AE005174">
    <property type="protein sequence ID" value="AAG57995.1"/>
    <property type="molecule type" value="Genomic_DNA"/>
</dbReference>
<dbReference type="EMBL" id="BA000007">
    <property type="protein sequence ID" value="BAB37162.2"/>
    <property type="status" value="ALT_INIT"/>
    <property type="molecule type" value="Genomic_DNA"/>
</dbReference>
<dbReference type="PIR" id="C91096">
    <property type="entry name" value="C91096"/>
</dbReference>
<dbReference type="PIR" id="G85941">
    <property type="entry name" value="G85941"/>
</dbReference>
<dbReference type="RefSeq" id="NP_311766.1">
    <property type="nucleotide sequence ID" value="NC_002695.1"/>
</dbReference>
<dbReference type="SMR" id="Q8X6C7"/>
<dbReference type="STRING" id="155864.Z4205"/>
<dbReference type="GeneID" id="916443"/>
<dbReference type="KEGG" id="ece:Z4205"/>
<dbReference type="KEGG" id="ecs:ECs_3739"/>
<dbReference type="PATRIC" id="fig|386585.9.peg.3901"/>
<dbReference type="eggNOG" id="COG1529">
    <property type="taxonomic scope" value="Bacteria"/>
</dbReference>
<dbReference type="HOGENOM" id="CLU_001681_2_1_6"/>
<dbReference type="UniPathway" id="UPA00604">
    <property type="reaction ID" value="UER00661"/>
</dbReference>
<dbReference type="UniPathway" id="UPA00604">
    <property type="reaction ID" value="UER00662"/>
</dbReference>
<dbReference type="Proteomes" id="UP000000558">
    <property type="component" value="Chromosome"/>
</dbReference>
<dbReference type="Proteomes" id="UP000002519">
    <property type="component" value="Chromosome"/>
</dbReference>
<dbReference type="GO" id="GO:0002197">
    <property type="term" value="C:xanthine dehydrogenase complex"/>
    <property type="evidence" value="ECO:0007669"/>
    <property type="project" value="InterPro"/>
</dbReference>
<dbReference type="GO" id="GO:0005506">
    <property type="term" value="F:iron ion binding"/>
    <property type="evidence" value="ECO:0007669"/>
    <property type="project" value="InterPro"/>
</dbReference>
<dbReference type="GO" id="GO:0004854">
    <property type="term" value="F:xanthine dehydrogenase activity"/>
    <property type="evidence" value="ECO:0007669"/>
    <property type="project" value="UniProtKB-EC"/>
</dbReference>
<dbReference type="GO" id="GO:0009114">
    <property type="term" value="P:hypoxanthine catabolic process"/>
    <property type="evidence" value="ECO:0007669"/>
    <property type="project" value="UniProtKB-UniPathway"/>
</dbReference>
<dbReference type="GO" id="GO:0006166">
    <property type="term" value="P:purine ribonucleoside salvage"/>
    <property type="evidence" value="ECO:0007669"/>
    <property type="project" value="UniProtKB-KW"/>
</dbReference>
<dbReference type="Gene3D" id="3.90.1170.50">
    <property type="entry name" value="Aldehyde oxidase/xanthine dehydrogenase, a/b hammerhead"/>
    <property type="match status" value="1"/>
</dbReference>
<dbReference type="Gene3D" id="3.30.365.10">
    <property type="entry name" value="Aldehyde oxidase/xanthine dehydrogenase, molybdopterin binding domain"/>
    <property type="match status" value="4"/>
</dbReference>
<dbReference type="InterPro" id="IPR000674">
    <property type="entry name" value="Ald_Oxase/Xan_DH_a/b"/>
</dbReference>
<dbReference type="InterPro" id="IPR036856">
    <property type="entry name" value="Ald_Oxase/Xan_DH_a/b_sf"/>
</dbReference>
<dbReference type="InterPro" id="IPR016208">
    <property type="entry name" value="Ald_Oxase/xanthine_DH-like"/>
</dbReference>
<dbReference type="InterPro" id="IPR008274">
    <property type="entry name" value="AldOxase/xan_DH_MoCoBD1"/>
</dbReference>
<dbReference type="InterPro" id="IPR046867">
    <property type="entry name" value="AldOxase/xan_DH_MoCoBD2"/>
</dbReference>
<dbReference type="InterPro" id="IPR037165">
    <property type="entry name" value="AldOxase/xan_DH_Mopterin-bd_sf"/>
</dbReference>
<dbReference type="InterPro" id="IPR050028">
    <property type="entry name" value="XdhA_XDHase"/>
</dbReference>
<dbReference type="NCBIfam" id="NF007426">
    <property type="entry name" value="PRK09970.1"/>
    <property type="match status" value="1"/>
</dbReference>
<dbReference type="NCBIfam" id="NF043082">
    <property type="entry name" value="XdhA_XDHase"/>
    <property type="match status" value="1"/>
</dbReference>
<dbReference type="PANTHER" id="PTHR11908:SF132">
    <property type="entry name" value="ALDEHYDE OXIDASE 1-RELATED"/>
    <property type="match status" value="1"/>
</dbReference>
<dbReference type="PANTHER" id="PTHR11908">
    <property type="entry name" value="XANTHINE DEHYDROGENASE"/>
    <property type="match status" value="1"/>
</dbReference>
<dbReference type="Pfam" id="PF01315">
    <property type="entry name" value="Ald_Xan_dh_C"/>
    <property type="match status" value="1"/>
</dbReference>
<dbReference type="Pfam" id="PF02738">
    <property type="entry name" value="MoCoBD_1"/>
    <property type="match status" value="1"/>
</dbReference>
<dbReference type="Pfam" id="PF20256">
    <property type="entry name" value="MoCoBD_2"/>
    <property type="match status" value="1"/>
</dbReference>
<dbReference type="SMART" id="SM01008">
    <property type="entry name" value="Ald_Xan_dh_C"/>
    <property type="match status" value="1"/>
</dbReference>
<dbReference type="SUPFAM" id="SSF54665">
    <property type="entry name" value="CO dehydrogenase molybdoprotein N-domain-like"/>
    <property type="match status" value="1"/>
</dbReference>
<dbReference type="SUPFAM" id="SSF56003">
    <property type="entry name" value="Molybdenum cofactor-binding domain"/>
    <property type="match status" value="1"/>
</dbReference>